<feature type="chain" id="PRO_1000199414" description="Proline--tRNA ligase">
    <location>
        <begin position="1"/>
        <end position="572"/>
    </location>
</feature>
<gene>
    <name evidence="1" type="primary">proS</name>
    <name type="ordered locus">SeAg_B0283</name>
</gene>
<dbReference type="EC" id="6.1.1.15" evidence="1"/>
<dbReference type="EMBL" id="CP001138">
    <property type="protein sequence ID" value="ACH51642.1"/>
    <property type="molecule type" value="Genomic_DNA"/>
</dbReference>
<dbReference type="RefSeq" id="WP_001260687.1">
    <property type="nucleotide sequence ID" value="NC_011149.1"/>
</dbReference>
<dbReference type="SMR" id="B5F8V6"/>
<dbReference type="KEGG" id="sea:SeAg_B0283"/>
<dbReference type="HOGENOM" id="CLU_016739_0_0_6"/>
<dbReference type="Proteomes" id="UP000008819">
    <property type="component" value="Chromosome"/>
</dbReference>
<dbReference type="GO" id="GO:0005829">
    <property type="term" value="C:cytosol"/>
    <property type="evidence" value="ECO:0007669"/>
    <property type="project" value="TreeGrafter"/>
</dbReference>
<dbReference type="GO" id="GO:0002161">
    <property type="term" value="F:aminoacyl-tRNA deacylase activity"/>
    <property type="evidence" value="ECO:0007669"/>
    <property type="project" value="InterPro"/>
</dbReference>
<dbReference type="GO" id="GO:0005524">
    <property type="term" value="F:ATP binding"/>
    <property type="evidence" value="ECO:0007669"/>
    <property type="project" value="UniProtKB-UniRule"/>
</dbReference>
<dbReference type="GO" id="GO:0004827">
    <property type="term" value="F:proline-tRNA ligase activity"/>
    <property type="evidence" value="ECO:0007669"/>
    <property type="project" value="UniProtKB-UniRule"/>
</dbReference>
<dbReference type="GO" id="GO:0006433">
    <property type="term" value="P:prolyl-tRNA aminoacylation"/>
    <property type="evidence" value="ECO:0007669"/>
    <property type="project" value="UniProtKB-UniRule"/>
</dbReference>
<dbReference type="CDD" id="cd04334">
    <property type="entry name" value="ProRS-INS"/>
    <property type="match status" value="1"/>
</dbReference>
<dbReference type="CDD" id="cd00861">
    <property type="entry name" value="ProRS_anticodon_short"/>
    <property type="match status" value="1"/>
</dbReference>
<dbReference type="CDD" id="cd00779">
    <property type="entry name" value="ProRS_core_prok"/>
    <property type="match status" value="1"/>
</dbReference>
<dbReference type="FunFam" id="3.30.930.10:FF:000012">
    <property type="entry name" value="Proline--tRNA ligase"/>
    <property type="match status" value="1"/>
</dbReference>
<dbReference type="FunFam" id="3.30.930.10:FF:000097">
    <property type="entry name" value="Proline--tRNA ligase"/>
    <property type="match status" value="1"/>
</dbReference>
<dbReference type="FunFam" id="3.40.50.800:FF:000006">
    <property type="entry name" value="Proline--tRNA ligase"/>
    <property type="match status" value="1"/>
</dbReference>
<dbReference type="FunFam" id="3.90.960.10:FF:000001">
    <property type="entry name" value="Proline--tRNA ligase"/>
    <property type="match status" value="1"/>
</dbReference>
<dbReference type="Gene3D" id="3.40.50.800">
    <property type="entry name" value="Anticodon-binding domain"/>
    <property type="match status" value="1"/>
</dbReference>
<dbReference type="Gene3D" id="3.30.930.10">
    <property type="entry name" value="Bira Bifunctional Protein, Domain 2"/>
    <property type="match status" value="2"/>
</dbReference>
<dbReference type="Gene3D" id="3.90.960.10">
    <property type="entry name" value="YbaK/aminoacyl-tRNA synthetase-associated domain"/>
    <property type="match status" value="1"/>
</dbReference>
<dbReference type="HAMAP" id="MF_01569">
    <property type="entry name" value="Pro_tRNA_synth_type1"/>
    <property type="match status" value="1"/>
</dbReference>
<dbReference type="InterPro" id="IPR002314">
    <property type="entry name" value="aa-tRNA-synt_IIb"/>
</dbReference>
<dbReference type="InterPro" id="IPR006195">
    <property type="entry name" value="aa-tRNA-synth_II"/>
</dbReference>
<dbReference type="InterPro" id="IPR045864">
    <property type="entry name" value="aa-tRNA-synth_II/BPL/LPL"/>
</dbReference>
<dbReference type="InterPro" id="IPR004154">
    <property type="entry name" value="Anticodon-bd"/>
</dbReference>
<dbReference type="InterPro" id="IPR036621">
    <property type="entry name" value="Anticodon-bd_dom_sf"/>
</dbReference>
<dbReference type="InterPro" id="IPR002316">
    <property type="entry name" value="Pro-tRNA-ligase_IIa"/>
</dbReference>
<dbReference type="InterPro" id="IPR004500">
    <property type="entry name" value="Pro-tRNA-synth_IIa_bac-type"/>
</dbReference>
<dbReference type="InterPro" id="IPR023717">
    <property type="entry name" value="Pro-tRNA-Synthase_IIa_type1"/>
</dbReference>
<dbReference type="InterPro" id="IPR050062">
    <property type="entry name" value="Pro-tRNA_synthetase"/>
</dbReference>
<dbReference type="InterPro" id="IPR044140">
    <property type="entry name" value="ProRS_anticodon_short"/>
</dbReference>
<dbReference type="InterPro" id="IPR033730">
    <property type="entry name" value="ProRS_core_prok"/>
</dbReference>
<dbReference type="InterPro" id="IPR036754">
    <property type="entry name" value="YbaK/aa-tRNA-synt-asso_dom_sf"/>
</dbReference>
<dbReference type="InterPro" id="IPR007214">
    <property type="entry name" value="YbaK/aa-tRNA-synth-assoc-dom"/>
</dbReference>
<dbReference type="NCBIfam" id="NF006625">
    <property type="entry name" value="PRK09194.1"/>
    <property type="match status" value="1"/>
</dbReference>
<dbReference type="NCBIfam" id="TIGR00409">
    <property type="entry name" value="proS_fam_II"/>
    <property type="match status" value="1"/>
</dbReference>
<dbReference type="PANTHER" id="PTHR42753">
    <property type="entry name" value="MITOCHONDRIAL RIBOSOME PROTEIN L39/PROLYL-TRNA LIGASE FAMILY MEMBER"/>
    <property type="match status" value="1"/>
</dbReference>
<dbReference type="PANTHER" id="PTHR42753:SF2">
    <property type="entry name" value="PROLINE--TRNA LIGASE"/>
    <property type="match status" value="1"/>
</dbReference>
<dbReference type="Pfam" id="PF03129">
    <property type="entry name" value="HGTP_anticodon"/>
    <property type="match status" value="1"/>
</dbReference>
<dbReference type="Pfam" id="PF00587">
    <property type="entry name" value="tRNA-synt_2b"/>
    <property type="match status" value="1"/>
</dbReference>
<dbReference type="Pfam" id="PF04073">
    <property type="entry name" value="tRNA_edit"/>
    <property type="match status" value="1"/>
</dbReference>
<dbReference type="PIRSF" id="PIRSF001535">
    <property type="entry name" value="ProRS_1"/>
    <property type="match status" value="1"/>
</dbReference>
<dbReference type="PRINTS" id="PR01046">
    <property type="entry name" value="TRNASYNTHPRO"/>
</dbReference>
<dbReference type="SUPFAM" id="SSF52954">
    <property type="entry name" value="Class II aaRS ABD-related"/>
    <property type="match status" value="1"/>
</dbReference>
<dbReference type="SUPFAM" id="SSF55681">
    <property type="entry name" value="Class II aaRS and biotin synthetases"/>
    <property type="match status" value="1"/>
</dbReference>
<dbReference type="SUPFAM" id="SSF55826">
    <property type="entry name" value="YbaK/ProRS associated domain"/>
    <property type="match status" value="1"/>
</dbReference>
<dbReference type="PROSITE" id="PS50862">
    <property type="entry name" value="AA_TRNA_LIGASE_II"/>
    <property type="match status" value="1"/>
</dbReference>
<organism>
    <name type="scientific">Salmonella agona (strain SL483)</name>
    <dbReference type="NCBI Taxonomy" id="454166"/>
    <lineage>
        <taxon>Bacteria</taxon>
        <taxon>Pseudomonadati</taxon>
        <taxon>Pseudomonadota</taxon>
        <taxon>Gammaproteobacteria</taxon>
        <taxon>Enterobacterales</taxon>
        <taxon>Enterobacteriaceae</taxon>
        <taxon>Salmonella</taxon>
    </lineage>
</organism>
<comment type="function">
    <text evidence="1">Catalyzes the attachment of proline to tRNA(Pro) in a two-step reaction: proline is first activated by ATP to form Pro-AMP and then transferred to the acceptor end of tRNA(Pro). As ProRS can inadvertently accommodate and process non-cognate amino acids such as alanine and cysteine, to avoid such errors it has two additional distinct editing activities against alanine. One activity is designated as 'pretransfer' editing and involves the tRNA(Pro)-independent hydrolysis of activated Ala-AMP. The other activity is designated 'posttransfer' editing and involves deacylation of mischarged Ala-tRNA(Pro). The misacylated Cys-tRNA(Pro) is not edited by ProRS.</text>
</comment>
<comment type="catalytic activity">
    <reaction evidence="1">
        <text>tRNA(Pro) + L-proline + ATP = L-prolyl-tRNA(Pro) + AMP + diphosphate</text>
        <dbReference type="Rhea" id="RHEA:14305"/>
        <dbReference type="Rhea" id="RHEA-COMP:9700"/>
        <dbReference type="Rhea" id="RHEA-COMP:9702"/>
        <dbReference type="ChEBI" id="CHEBI:30616"/>
        <dbReference type="ChEBI" id="CHEBI:33019"/>
        <dbReference type="ChEBI" id="CHEBI:60039"/>
        <dbReference type="ChEBI" id="CHEBI:78442"/>
        <dbReference type="ChEBI" id="CHEBI:78532"/>
        <dbReference type="ChEBI" id="CHEBI:456215"/>
        <dbReference type="EC" id="6.1.1.15"/>
    </reaction>
</comment>
<comment type="subunit">
    <text evidence="1">Homodimer.</text>
</comment>
<comment type="subcellular location">
    <subcellularLocation>
        <location evidence="1">Cytoplasm</location>
    </subcellularLocation>
</comment>
<comment type="domain">
    <text evidence="1">Consists of three domains: the N-terminal catalytic domain, the editing domain and the C-terminal anticodon-binding domain.</text>
</comment>
<comment type="similarity">
    <text evidence="1">Belongs to the class-II aminoacyl-tRNA synthetase family. ProS type 1 subfamily.</text>
</comment>
<keyword id="KW-0030">Aminoacyl-tRNA synthetase</keyword>
<keyword id="KW-0067">ATP-binding</keyword>
<keyword id="KW-0963">Cytoplasm</keyword>
<keyword id="KW-0436">Ligase</keyword>
<keyword id="KW-0547">Nucleotide-binding</keyword>
<keyword id="KW-0648">Protein biosynthesis</keyword>
<protein>
    <recommendedName>
        <fullName evidence="1">Proline--tRNA ligase</fullName>
        <ecNumber evidence="1">6.1.1.15</ecNumber>
    </recommendedName>
    <alternativeName>
        <fullName evidence="1">Prolyl-tRNA synthetase</fullName>
        <shortName evidence="1">ProRS</shortName>
    </alternativeName>
</protein>
<proteinExistence type="inferred from homology"/>
<accession>B5F8V6</accession>
<name>SYP_SALA4</name>
<sequence>MRTSQYLLSTLKETPADAEVISHQLMLRAGMIRKLASGLYTWLPTGLRVLKKVENIVREEMNNAGAIEVSMPVVQPADLWQESGRWEQYGPELLRFVDRGERPFVLGPTHEEVITDLVRNELSSYKQLPLNFFQIQTKFRDEVRPRFGVMRSREFLMKDAYSFHTSQESLQETYDAMYAAYSRIFSRMGLDFRAVQADTGSIGGNASHEFQVLAQSGEDDIVFSDVSDYAANIELAEAIAPQTPRAAATQEMTLVDTPNAKTIAELVEQFNLPIEKTVKTLLVKAVKDSKSPLVALLVRGDHELNEVKAEKLPQVASPLTFATEEEIRAVINAGPGSLGPVNMPIPVIIDRTVAAMSDFAAGANIDGKHYFGINWDRDVATPVVADIRNVVAGDPSPDGQGTLLIKRGIEVGHIFQLGTKYSEALKASVQGEDGRNQILTMGCYGIGVTRVVAAAIEQNFDERGIVWPDAIAPFQVAILPMNMHKSFRVQELAEKLYSELRAQGIEVLMDDRKERPGVMFADMELIGIPHTIVIGDRNLDNDDIEYKYRRSGEKSLIKTGDIVDYLVKAIKG</sequence>
<reference key="1">
    <citation type="journal article" date="2011" name="J. Bacteriol.">
        <title>Comparative genomics of 28 Salmonella enterica isolates: evidence for CRISPR-mediated adaptive sublineage evolution.</title>
        <authorList>
            <person name="Fricke W.F."/>
            <person name="Mammel M.K."/>
            <person name="McDermott P.F."/>
            <person name="Tartera C."/>
            <person name="White D.G."/>
            <person name="Leclerc J.E."/>
            <person name="Ravel J."/>
            <person name="Cebula T.A."/>
        </authorList>
    </citation>
    <scope>NUCLEOTIDE SEQUENCE [LARGE SCALE GENOMIC DNA]</scope>
    <source>
        <strain>SL483</strain>
    </source>
</reference>
<evidence type="ECO:0000255" key="1">
    <source>
        <dbReference type="HAMAP-Rule" id="MF_01569"/>
    </source>
</evidence>